<name>Y1846_PSEP7</name>
<protein>
    <recommendedName>
        <fullName evidence="1">UPF0060 membrane protein PSPA7_1846</fullName>
    </recommendedName>
</protein>
<proteinExistence type="inferred from homology"/>
<gene>
    <name type="ordered locus">PSPA7_1846</name>
</gene>
<sequence length="109" mass="12120">MINYLWFVLAAFCEIAGCYAFYLWLRLGKSALWVLPGLLSLSLFALLLTRVEASYAGRAYAAYGGIYVAASLFWLAFVERSRPLWSDWLGVALCVLGASIVLFGPRLSQ</sequence>
<reference key="1">
    <citation type="submission" date="2007-06" db="EMBL/GenBank/DDBJ databases">
        <authorList>
            <person name="Dodson R.J."/>
            <person name="Harkins D."/>
            <person name="Paulsen I.T."/>
        </authorList>
    </citation>
    <scope>NUCLEOTIDE SEQUENCE [LARGE SCALE GENOMIC DNA]</scope>
    <source>
        <strain>DSM 24068 / PA7</strain>
    </source>
</reference>
<accession>A6V2E4</accession>
<feature type="chain" id="PRO_1000057082" description="UPF0060 membrane protein PSPA7_1846">
    <location>
        <begin position="1"/>
        <end position="109"/>
    </location>
</feature>
<feature type="transmembrane region" description="Helical" evidence="1">
    <location>
        <begin position="5"/>
        <end position="25"/>
    </location>
</feature>
<feature type="transmembrane region" description="Helical" evidence="1">
    <location>
        <begin position="27"/>
        <end position="47"/>
    </location>
</feature>
<feature type="transmembrane region" description="Helical" evidence="1">
    <location>
        <begin position="59"/>
        <end position="79"/>
    </location>
</feature>
<feature type="transmembrane region" description="Helical" evidence="1">
    <location>
        <begin position="84"/>
        <end position="104"/>
    </location>
</feature>
<organism>
    <name type="scientific">Pseudomonas paraeruginosa (strain DSM 24068 / PA7)</name>
    <name type="common">Pseudomonas aeruginosa (strain PA7)</name>
    <dbReference type="NCBI Taxonomy" id="381754"/>
    <lineage>
        <taxon>Bacteria</taxon>
        <taxon>Pseudomonadati</taxon>
        <taxon>Pseudomonadota</taxon>
        <taxon>Gammaproteobacteria</taxon>
        <taxon>Pseudomonadales</taxon>
        <taxon>Pseudomonadaceae</taxon>
        <taxon>Pseudomonas</taxon>
        <taxon>Pseudomonas paraeruginosa</taxon>
    </lineage>
</organism>
<evidence type="ECO:0000255" key="1">
    <source>
        <dbReference type="HAMAP-Rule" id="MF_00010"/>
    </source>
</evidence>
<keyword id="KW-0997">Cell inner membrane</keyword>
<keyword id="KW-1003">Cell membrane</keyword>
<keyword id="KW-0472">Membrane</keyword>
<keyword id="KW-0812">Transmembrane</keyword>
<keyword id="KW-1133">Transmembrane helix</keyword>
<dbReference type="EMBL" id="CP000744">
    <property type="protein sequence ID" value="ABR83554.1"/>
    <property type="molecule type" value="Genomic_DNA"/>
</dbReference>
<dbReference type="RefSeq" id="WP_012074948.1">
    <property type="nucleotide sequence ID" value="NC_009656.1"/>
</dbReference>
<dbReference type="GeneID" id="77220200"/>
<dbReference type="KEGG" id="pap:PSPA7_1846"/>
<dbReference type="HOGENOM" id="CLU_117653_1_0_6"/>
<dbReference type="Proteomes" id="UP000001582">
    <property type="component" value="Chromosome"/>
</dbReference>
<dbReference type="GO" id="GO:0005886">
    <property type="term" value="C:plasma membrane"/>
    <property type="evidence" value="ECO:0007669"/>
    <property type="project" value="UniProtKB-SubCell"/>
</dbReference>
<dbReference type="HAMAP" id="MF_00010">
    <property type="entry name" value="UPF0060"/>
    <property type="match status" value="1"/>
</dbReference>
<dbReference type="InterPro" id="IPR003844">
    <property type="entry name" value="UPF0060"/>
</dbReference>
<dbReference type="NCBIfam" id="NF002586">
    <property type="entry name" value="PRK02237.1"/>
    <property type="match status" value="1"/>
</dbReference>
<dbReference type="PANTHER" id="PTHR36116">
    <property type="entry name" value="UPF0060 MEMBRANE PROTEIN YNFA"/>
    <property type="match status" value="1"/>
</dbReference>
<dbReference type="PANTHER" id="PTHR36116:SF1">
    <property type="entry name" value="UPF0060 MEMBRANE PROTEIN YNFA"/>
    <property type="match status" value="1"/>
</dbReference>
<dbReference type="Pfam" id="PF02694">
    <property type="entry name" value="UPF0060"/>
    <property type="match status" value="1"/>
</dbReference>
<dbReference type="SUPFAM" id="SSF103481">
    <property type="entry name" value="Multidrug resistance efflux transporter EmrE"/>
    <property type="match status" value="1"/>
</dbReference>
<comment type="subcellular location">
    <subcellularLocation>
        <location evidence="1">Cell inner membrane</location>
        <topology evidence="1">Multi-pass membrane protein</topology>
    </subcellularLocation>
</comment>
<comment type="similarity">
    <text evidence="1">Belongs to the UPF0060 family.</text>
</comment>